<sequence>MSNKNNLRYALGALALSVSAASLAAPSEAQQFTEFWTPGKPNPSICKSPLLVSTPLGLPRCLQASNVVKRLQKLEDIASLNDGNRAAATPGYQASVDYVKQTLQKAGYKVSVQPFPFTAYYPKGPGSLSATVPQPVTYEWEKDFTYLSQTEAGDVTAKVVPVDLSLGAGNTSTSGCEAEDFANFPAGSIALIQRGTCNFEQKAENAAAAGAAGVIIFNQGNTDDRKGLENVTVGESYEGGIPVIFATYDNGVAWSQTPDLQLHLVVDVVRKKTETYNVVAETRRGNPNNVVMVGAHLDSVFEGPGINDNGSGSAAQLEMAVLLAKALPVNKVRFAWWGAEEAGLVGSTHYVQNLAPEEKKKIKAYLNFDMIGSPNFGNFIYDGDGSDFGLQGPPGSAAIERLFEAYFRLRGQQSEGTEIDFRSDYAEFFNSGIAFGGLFTGAEGLKTEEQAQKYGGTAGKAYDECYHSKCDGIANINQDALEIHSDAMAFVTSWLSLSTKVVDDEIAAAGQKAQSRSLQMQKSASQIERWGHDFIK</sequence>
<name>LAP_PSEAE</name>
<gene>
    <name evidence="7" type="primary">lap</name>
    <name type="ordered locus">PA2939</name>
</gene>
<organism>
    <name type="scientific">Pseudomonas aeruginosa (strain ATCC 15692 / DSM 22644 / CIP 104116 / JCM 14847 / LMG 12228 / 1C / PRS 101 / PAO1)</name>
    <dbReference type="NCBI Taxonomy" id="208964"/>
    <lineage>
        <taxon>Bacteria</taxon>
        <taxon>Pseudomonadati</taxon>
        <taxon>Pseudomonadota</taxon>
        <taxon>Gammaproteobacteria</taxon>
        <taxon>Pseudomonadales</taxon>
        <taxon>Pseudomonadaceae</taxon>
        <taxon>Pseudomonas</taxon>
    </lineage>
</organism>
<evidence type="ECO:0000250" key="1">
    <source>
        <dbReference type="UniProtKB" id="P80561"/>
    </source>
</evidence>
<evidence type="ECO:0000255" key="2"/>
<evidence type="ECO:0000269" key="3">
    <source>
    </source>
</evidence>
<evidence type="ECO:0000269" key="4">
    <source>
    </source>
</evidence>
<evidence type="ECO:0000303" key="5">
    <source>
    </source>
</evidence>
<evidence type="ECO:0000303" key="6">
    <source>
    </source>
</evidence>
<evidence type="ECO:0000305" key="7"/>
<evidence type="ECO:0000305" key="8">
    <source>
    </source>
</evidence>
<evidence type="ECO:0000305" key="9">
    <source>
    </source>
</evidence>
<evidence type="ECO:0007829" key="10">
    <source>
        <dbReference type="PDB" id="8AC9"/>
    </source>
</evidence>
<evidence type="ECO:0007829" key="11">
    <source>
        <dbReference type="PDB" id="8ACK"/>
    </source>
</evidence>
<evidence type="ECO:0007829" key="12">
    <source>
        <dbReference type="PDB" id="8ACR"/>
    </source>
</evidence>
<keyword id="KW-0002">3D-structure</keyword>
<keyword id="KW-0031">Aminopeptidase</keyword>
<keyword id="KW-0903">Direct protein sequencing</keyword>
<keyword id="KW-1015">Disulfide bond</keyword>
<keyword id="KW-0378">Hydrolase</keyword>
<keyword id="KW-0479">Metal-binding</keyword>
<keyword id="KW-0645">Protease</keyword>
<keyword id="KW-1185">Reference proteome</keyword>
<keyword id="KW-0964">Secreted</keyword>
<keyword id="KW-0732">Signal</keyword>
<keyword id="KW-0862">Zinc</keyword>
<keyword id="KW-0865">Zymogen</keyword>
<proteinExistence type="evidence at protein level"/>
<protein>
    <recommendedName>
        <fullName>Aminopeptidase</fullName>
        <ecNumber>3.4.11.1</ecNumber>
    </recommendedName>
    <alternativeName>
        <fullName>Leucine aminopeptidase</fullName>
    </alternativeName>
    <alternativeName>
        <fullName evidence="5">PaAP</fullName>
    </alternativeName>
    <component>
        <recommendedName>
            <fullName evidence="6">Aminopeptidase AP58</fullName>
        </recommendedName>
    </component>
    <component>
        <recommendedName>
            <fullName evidence="5">Aminopeptidase AP56</fullName>
        </recommendedName>
    </component>
    <component>
        <recommendedName>
            <fullName evidence="5">Aminopeptidase AP28</fullName>
        </recommendedName>
    </component>
</protein>
<reference key="1">
    <citation type="journal article" date="2000" name="Nature">
        <title>Complete genome sequence of Pseudomonas aeruginosa PAO1, an opportunistic pathogen.</title>
        <authorList>
            <person name="Stover C.K."/>
            <person name="Pham X.-Q.T."/>
            <person name="Erwin A.L."/>
            <person name="Mizoguchi S.D."/>
            <person name="Warrener P."/>
            <person name="Hickey M.J."/>
            <person name="Brinkman F.S.L."/>
            <person name="Hufnagle W.O."/>
            <person name="Kowalik D.J."/>
            <person name="Lagrou M."/>
            <person name="Garber R.L."/>
            <person name="Goltry L."/>
            <person name="Tolentino E."/>
            <person name="Westbrock-Wadman S."/>
            <person name="Yuan Y."/>
            <person name="Brody L.L."/>
            <person name="Coulter S.N."/>
            <person name="Folger K.R."/>
            <person name="Kas A."/>
            <person name="Larbig K."/>
            <person name="Lim R.M."/>
            <person name="Smith K.A."/>
            <person name="Spencer D.H."/>
            <person name="Wong G.K.-S."/>
            <person name="Wu Z."/>
            <person name="Paulsen I.T."/>
            <person name="Reizer J."/>
            <person name="Saier M.H. Jr."/>
            <person name="Hancock R.E.W."/>
            <person name="Lory S."/>
            <person name="Olson M.V."/>
        </authorList>
    </citation>
    <scope>NUCLEOTIDE SEQUENCE [LARGE SCALE GENOMIC DNA]</scope>
    <source>
        <strain>ATCC 15692 / DSM 22644 / CIP 104116 / JCM 14847 / LMG 12228 / 1C / PRS 101 / PAO1</strain>
    </source>
</reference>
<reference key="2">
    <citation type="journal article" date="1998" name="J. Bacteriol.">
        <title>Secretion of elastinolytic enzymes and their propeptides by Pseudomonas aeruginosa.</title>
        <authorList>
            <person name="Braun P."/>
            <person name="de Groot A."/>
            <person name="Bitter W."/>
            <person name="Tommassen J."/>
        </authorList>
    </citation>
    <scope>PROTEIN SEQUENCE OF 25-34</scope>
    <source>
        <strain>PAO1 / PAO25</strain>
    </source>
</reference>
<reference key="3">
    <citation type="journal article" date="2001" name="J. Biol. Chem.">
        <title>A secreted aminopeptidase of Pseudomonas aeruginosa. Identification, primary structure, and relationship to other aminopeptidases.</title>
        <authorList>
            <person name="Cahan R."/>
            <person name="Axelrad I."/>
            <person name="Safrin M."/>
            <person name="Ohman D.E."/>
            <person name="Kessler E."/>
        </authorList>
    </citation>
    <scope>PROTEIN SEQUENCE OF 39-58 AND 273-291</scope>
    <scope>FUNCTION</scope>
    <scope>CATALYTIC ACTIVITY</scope>
    <scope>ACTIVITY REGULATION</scope>
    <scope>BIOPHYSICOCHEMICAL PROPERTIES</scope>
    <scope>SUBCELLULAR LOCATION</scope>
    <scope>PROTEOLYTIC CLEAVAGE</scope>
    <source>
        <strain>ATCC 15692 / DSM 22644 / CIP 104116 / JCM 14847 / LMG 12228 / 1C / PRS 101 / PAO1</strain>
        <strain>FRD2</strain>
    </source>
</reference>
<accession>Q9HZQ8</accession>
<comment type="function">
    <text evidence="3">A secreted aminopeptidase. Acts on free N-terminal amino groups with a very strong preference for Leu- followed by Met- and Ala-, and no activity on Glu- or Gly- peptides (an exhaustive analysis was not performed). Both the AP56 and AP28 forms have activity.</text>
</comment>
<comment type="catalytic activity">
    <reaction evidence="3">
        <text>Release of an N-terminal amino acid, Xaa-|-Yaa-, in which Xaa is preferably Leu, but may be other amino acids including Pro although not Arg or Lys, and Yaa may be Pro. Amino acid amides and methyl esters are also readily hydrolyzed, but rates on arylamides are exceedingly low.</text>
        <dbReference type="EC" id="3.4.11.1"/>
    </reaction>
</comment>
<comment type="activity regulation">
    <text evidence="3">Mature protein inhibited by dithiothreitol and Zn(2+) chelators such as 1,10-phenanthroline, EDTA and EGTA. Not inhibited by serine-protease inhibitors, N-ethylmaleimide or phosphoramidon (which inhibits elastase).</text>
</comment>
<comment type="biophysicochemical properties">
    <phDependence>
        <text evidence="3">Optimum pH is 8.5, active between pH 7 and 9.5.</text>
    </phDependence>
</comment>
<comment type="subcellular location">
    <subcellularLocation>
        <location evidence="3">Secreted</location>
    </subcellularLocation>
</comment>
<comment type="PTM">
    <text evidence="3">Processing of the 56 kDa pro-protein to mature protein requires elastase (lasB); in vitro it only occurs at greater than 55 degrees Celsius.</text>
</comment>
<comment type="PTM">
    <text evidence="8 9">Several forms of the enzyme have been identified by molecular weight, exactly which part of the sequence they correspond to is not always clear. The AP58 form may be subject to proteolysis to give rise to AP56.</text>
</comment>
<comment type="similarity">
    <text evidence="7">Belongs to the peptidase M28 family. M28A subfamily.</text>
</comment>
<dbReference type="EC" id="3.4.11.1"/>
<dbReference type="EMBL" id="AE004091">
    <property type="protein sequence ID" value="AAG06327.1"/>
    <property type="molecule type" value="Genomic_DNA"/>
</dbReference>
<dbReference type="PIR" id="B83278">
    <property type="entry name" value="B83278"/>
</dbReference>
<dbReference type="RefSeq" id="NP_251629.1">
    <property type="nucleotide sequence ID" value="NC_002516.2"/>
</dbReference>
<dbReference type="PDB" id="8AC7">
    <property type="method" value="X-ray"/>
    <property type="resolution" value="1.40 A"/>
    <property type="chains" value="A/B=27-536"/>
</dbReference>
<dbReference type="PDB" id="8AC9">
    <property type="method" value="X-ray"/>
    <property type="resolution" value="2.35 A"/>
    <property type="chains" value="A/B=27-516"/>
</dbReference>
<dbReference type="PDB" id="8ACG">
    <property type="method" value="X-ray"/>
    <property type="resolution" value="2.84 A"/>
    <property type="chains" value="A/B/C/D/E/F=27-516"/>
</dbReference>
<dbReference type="PDB" id="8ACK">
    <property type="method" value="X-ray"/>
    <property type="resolution" value="1.78 A"/>
    <property type="chains" value="A/B=27-512, C/P=528-536"/>
</dbReference>
<dbReference type="PDB" id="8ACR">
    <property type="method" value="X-ray"/>
    <property type="resolution" value="2.10 A"/>
    <property type="chains" value="A=27-536"/>
</dbReference>
<dbReference type="PDBsum" id="8AC7"/>
<dbReference type="PDBsum" id="8AC9"/>
<dbReference type="PDBsum" id="8ACG"/>
<dbReference type="PDBsum" id="8ACK"/>
<dbReference type="PDBsum" id="8ACR"/>
<dbReference type="SMR" id="Q9HZQ8"/>
<dbReference type="STRING" id="208964.PA2939"/>
<dbReference type="MEROPS" id="M28.003"/>
<dbReference type="MEROPS" id="M28.008"/>
<dbReference type="PaxDb" id="208964-PA2939"/>
<dbReference type="DNASU" id="882792"/>
<dbReference type="GeneID" id="882792"/>
<dbReference type="KEGG" id="pae:PA2939"/>
<dbReference type="PATRIC" id="fig|208964.12.peg.3082"/>
<dbReference type="PseudoCAP" id="PA2939"/>
<dbReference type="HOGENOM" id="CLU_024336_0_2_6"/>
<dbReference type="InParanoid" id="Q9HZQ8"/>
<dbReference type="OrthoDB" id="9778250at2"/>
<dbReference type="PhylomeDB" id="Q9HZQ8"/>
<dbReference type="BioCyc" id="PAER208964:G1FZ6-2989-MONOMER"/>
<dbReference type="BRENDA" id="3.4.11.1">
    <property type="organism ID" value="5087"/>
</dbReference>
<dbReference type="PHI-base" id="PHI:9776"/>
<dbReference type="Proteomes" id="UP000002438">
    <property type="component" value="Chromosome"/>
</dbReference>
<dbReference type="GO" id="GO:0005576">
    <property type="term" value="C:extracellular region"/>
    <property type="evidence" value="ECO:0007669"/>
    <property type="project" value="UniProtKB-SubCell"/>
</dbReference>
<dbReference type="GO" id="GO:0004177">
    <property type="term" value="F:aminopeptidase activity"/>
    <property type="evidence" value="ECO:0007669"/>
    <property type="project" value="UniProtKB-KW"/>
</dbReference>
<dbReference type="GO" id="GO:0046872">
    <property type="term" value="F:metal ion binding"/>
    <property type="evidence" value="ECO:0007669"/>
    <property type="project" value="UniProtKB-KW"/>
</dbReference>
<dbReference type="GO" id="GO:0008235">
    <property type="term" value="F:metalloexopeptidase activity"/>
    <property type="evidence" value="ECO:0007669"/>
    <property type="project" value="InterPro"/>
</dbReference>
<dbReference type="GO" id="GO:0015628">
    <property type="term" value="P:protein secretion by the type II secretion system"/>
    <property type="evidence" value="ECO:0000314"/>
    <property type="project" value="PseudoCAP"/>
</dbReference>
<dbReference type="GO" id="GO:0043952">
    <property type="term" value="P:protein transport by the Sec complex"/>
    <property type="evidence" value="ECO:0000314"/>
    <property type="project" value="PseudoCAP"/>
</dbReference>
<dbReference type="GO" id="GO:0006508">
    <property type="term" value="P:proteolysis"/>
    <property type="evidence" value="ECO:0000314"/>
    <property type="project" value="PseudoCAP"/>
</dbReference>
<dbReference type="CDD" id="cd03876">
    <property type="entry name" value="M28_SGAP_like"/>
    <property type="match status" value="1"/>
</dbReference>
<dbReference type="CDD" id="cd00538">
    <property type="entry name" value="PA"/>
    <property type="match status" value="1"/>
</dbReference>
<dbReference type="Gene3D" id="3.50.30.30">
    <property type="match status" value="1"/>
</dbReference>
<dbReference type="Gene3D" id="3.40.630.10">
    <property type="entry name" value="Zn peptidases"/>
    <property type="match status" value="2"/>
</dbReference>
<dbReference type="InterPro" id="IPR045175">
    <property type="entry name" value="M28_fam"/>
</dbReference>
<dbReference type="InterPro" id="IPR041756">
    <property type="entry name" value="M28_SGAP-like"/>
</dbReference>
<dbReference type="InterPro" id="IPR046450">
    <property type="entry name" value="PA_dom_sf"/>
</dbReference>
<dbReference type="InterPro" id="IPR003137">
    <property type="entry name" value="PA_domain"/>
</dbReference>
<dbReference type="InterPro" id="IPR007484">
    <property type="entry name" value="Peptidase_M28"/>
</dbReference>
<dbReference type="PANTHER" id="PTHR12147">
    <property type="entry name" value="METALLOPEPTIDASE M28 FAMILY MEMBER"/>
    <property type="match status" value="1"/>
</dbReference>
<dbReference type="PANTHER" id="PTHR12147:SF26">
    <property type="entry name" value="PEPTIDASE M28 DOMAIN-CONTAINING PROTEIN"/>
    <property type="match status" value="1"/>
</dbReference>
<dbReference type="Pfam" id="PF02225">
    <property type="entry name" value="PA"/>
    <property type="match status" value="1"/>
</dbReference>
<dbReference type="Pfam" id="PF04389">
    <property type="entry name" value="Peptidase_M28"/>
    <property type="match status" value="1"/>
</dbReference>
<dbReference type="SUPFAM" id="SSF52025">
    <property type="entry name" value="PA domain"/>
    <property type="match status" value="1"/>
</dbReference>
<dbReference type="SUPFAM" id="SSF53187">
    <property type="entry name" value="Zn-dependent exopeptidases"/>
    <property type="match status" value="1"/>
</dbReference>
<feature type="signal peptide" evidence="4">
    <location>
        <begin position="1"/>
        <end position="24"/>
    </location>
</feature>
<feature type="chain" id="PRO_0000431392" description="Aminopeptidase AP58" evidence="4">
    <location>
        <begin position="25"/>
        <end position="536"/>
    </location>
</feature>
<feature type="chain" id="PRO_0000431393" description="Aminopeptidase AP56" evidence="3">
    <location>
        <begin position="39"/>
        <end position="536"/>
    </location>
</feature>
<feature type="chain" id="PRO_0000431394" description="Aminopeptidase AP28" evidence="3">
    <location>
        <begin position="273"/>
        <end position="536"/>
    </location>
</feature>
<feature type="domain" description="PA" evidence="2">
    <location>
        <begin position="152"/>
        <end position="255"/>
    </location>
</feature>
<feature type="active site" description="Proton acceptor" evidence="1">
    <location>
        <position position="340"/>
    </location>
</feature>
<feature type="binding site" evidence="1">
    <location>
        <position position="296"/>
    </location>
    <ligand>
        <name>Zn(2+)</name>
        <dbReference type="ChEBI" id="CHEBI:29105"/>
        <label>1</label>
        <note>catalytic</note>
    </ligand>
</feature>
<feature type="binding site" evidence="1">
    <location>
        <position position="308"/>
    </location>
    <ligand>
        <name>Zn(2+)</name>
        <dbReference type="ChEBI" id="CHEBI:29105"/>
        <label>1</label>
        <note>catalytic</note>
    </ligand>
</feature>
<feature type="binding site" evidence="1">
    <location>
        <position position="308"/>
    </location>
    <ligand>
        <name>Zn(2+)</name>
        <dbReference type="ChEBI" id="CHEBI:29105"/>
        <label>2</label>
        <note>catalytic</note>
    </ligand>
</feature>
<feature type="binding site" evidence="1">
    <location>
        <position position="341"/>
    </location>
    <ligand>
        <name>Zn(2+)</name>
        <dbReference type="ChEBI" id="CHEBI:29105"/>
        <label>2</label>
        <note>catalytic</note>
    </ligand>
</feature>
<feature type="binding site" evidence="1">
    <location>
        <position position="369"/>
    </location>
    <ligand>
        <name>Zn(2+)</name>
        <dbReference type="ChEBI" id="CHEBI:29105"/>
        <label>1</label>
        <note>catalytic</note>
    </ligand>
</feature>
<feature type="binding site" evidence="1">
    <location>
        <position position="467"/>
    </location>
    <ligand>
        <name>Zn(2+)</name>
        <dbReference type="ChEBI" id="CHEBI:29105"/>
        <label>2</label>
        <note>catalytic</note>
    </ligand>
</feature>
<feature type="site" description="Transition state stabilizer" evidence="1">
    <location>
        <position position="466"/>
    </location>
</feature>
<feature type="disulfide bond" evidence="1">
    <location>
        <begin position="465"/>
        <end position="470"/>
    </location>
</feature>
<feature type="sequence variant" description="In strain: FRD2.">
    <original>C</original>
    <variation>A</variation>
    <location>
        <position position="46"/>
    </location>
</feature>
<feature type="helix" evidence="11">
    <location>
        <begin position="45"/>
        <end position="47"/>
    </location>
</feature>
<feature type="helix" evidence="11">
    <location>
        <begin position="49"/>
        <end position="52"/>
    </location>
</feature>
<feature type="turn" evidence="11">
    <location>
        <begin position="55"/>
        <end position="57"/>
    </location>
</feature>
<feature type="helix" evidence="11">
    <location>
        <begin position="58"/>
        <end position="61"/>
    </location>
</feature>
<feature type="helix" evidence="11">
    <location>
        <begin position="64"/>
        <end position="80"/>
    </location>
</feature>
<feature type="turn" evidence="11">
    <location>
        <begin position="81"/>
        <end position="83"/>
    </location>
</feature>
<feature type="helix" evidence="11">
    <location>
        <begin position="90"/>
        <end position="105"/>
    </location>
</feature>
<feature type="strand" evidence="11">
    <location>
        <begin position="110"/>
        <end position="122"/>
    </location>
</feature>
<feature type="strand" evidence="11">
    <location>
        <begin position="127"/>
        <end position="134"/>
    </location>
</feature>
<feature type="turn" evidence="11">
    <location>
        <begin position="140"/>
        <end position="142"/>
    </location>
</feature>
<feature type="strand" evidence="11">
    <location>
        <begin position="143"/>
        <end position="146"/>
    </location>
</feature>
<feature type="strand" evidence="11">
    <location>
        <begin position="153"/>
        <end position="163"/>
    </location>
</feature>
<feature type="turn" evidence="10">
    <location>
        <begin position="174"/>
        <end position="176"/>
    </location>
</feature>
<feature type="helix" evidence="11">
    <location>
        <begin position="178"/>
        <end position="181"/>
    </location>
</feature>
<feature type="strand" evidence="11">
    <location>
        <begin position="188"/>
        <end position="193"/>
    </location>
</feature>
<feature type="helix" evidence="11">
    <location>
        <begin position="199"/>
        <end position="208"/>
    </location>
</feature>
<feature type="strand" evidence="11">
    <location>
        <begin position="212"/>
        <end position="217"/>
    </location>
</feature>
<feature type="strand" evidence="11">
    <location>
        <begin position="225"/>
        <end position="227"/>
    </location>
</feature>
<feature type="strand" evidence="11">
    <location>
        <begin position="243"/>
        <end position="246"/>
    </location>
</feature>
<feature type="helix" evidence="11">
    <location>
        <begin position="248"/>
        <end position="255"/>
    </location>
</feature>
<feature type="strand" evidence="11">
    <location>
        <begin position="261"/>
        <end position="266"/>
    </location>
</feature>
<feature type="strand" evidence="11">
    <location>
        <begin position="268"/>
        <end position="281"/>
    </location>
</feature>
<feature type="strand" evidence="11">
    <location>
        <begin position="283"/>
        <end position="296"/>
    </location>
</feature>
<feature type="turn" evidence="11">
    <location>
        <begin position="306"/>
        <end position="309"/>
    </location>
</feature>
<feature type="helix" evidence="11">
    <location>
        <begin position="310"/>
        <end position="323"/>
    </location>
</feature>
<feature type="strand" evidence="11">
    <location>
        <begin position="329"/>
        <end position="339"/>
    </location>
</feature>
<feature type="helix" evidence="11">
    <location>
        <begin position="340"/>
        <end position="342"/>
    </location>
</feature>
<feature type="helix" evidence="11">
    <location>
        <begin position="345"/>
        <end position="353"/>
    </location>
</feature>
<feature type="helix" evidence="11">
    <location>
        <begin position="356"/>
        <end position="359"/>
    </location>
</feature>
<feature type="strand" evidence="11">
    <location>
        <begin position="362"/>
        <end position="368"/>
    </location>
</feature>
<feature type="strand" evidence="11">
    <location>
        <begin position="379"/>
        <end position="381"/>
    </location>
</feature>
<feature type="turn" evidence="11">
    <location>
        <begin position="386"/>
        <end position="388"/>
    </location>
</feature>
<feature type="helix" evidence="11">
    <location>
        <begin position="396"/>
        <end position="409"/>
    </location>
</feature>
<feature type="strand" evidence="11">
    <location>
        <begin position="415"/>
        <end position="417"/>
    </location>
</feature>
<feature type="helix" evidence="11">
    <location>
        <begin position="426"/>
        <end position="430"/>
    </location>
</feature>
<feature type="strand" evidence="11">
    <location>
        <begin position="434"/>
        <end position="439"/>
    </location>
</feature>
<feature type="strand" evidence="11">
    <location>
        <begin position="442"/>
        <end position="445"/>
    </location>
</feature>
<feature type="helix" evidence="11">
    <location>
        <begin position="448"/>
        <end position="454"/>
    </location>
</feature>
<feature type="strand" evidence="11">
    <location>
        <begin position="460"/>
        <end position="462"/>
    </location>
</feature>
<feature type="turn" evidence="11">
    <location>
        <begin position="464"/>
        <end position="467"/>
    </location>
</feature>
<feature type="helix" evidence="11">
    <location>
        <begin position="473"/>
        <end position="475"/>
    </location>
</feature>
<feature type="helix" evidence="11">
    <location>
        <begin position="478"/>
        <end position="497"/>
    </location>
</feature>
<feature type="helix" evidence="11">
    <location>
        <begin position="500"/>
        <end position="509"/>
    </location>
</feature>
<feature type="strand" evidence="12">
    <location>
        <begin position="529"/>
        <end position="534"/>
    </location>
</feature>